<gene>
    <name evidence="1" type="primary">efp</name>
    <name type="ordered locus">EcE24377A_4704</name>
</gene>
<accession>A7ZV18</accession>
<evidence type="ECO:0000255" key="1">
    <source>
        <dbReference type="HAMAP-Rule" id="MF_00141"/>
    </source>
</evidence>
<name>EFP_ECO24</name>
<protein>
    <recommendedName>
        <fullName evidence="1">Elongation factor P</fullName>
        <shortName evidence="1">EF-P</shortName>
    </recommendedName>
</protein>
<dbReference type="EMBL" id="CP000800">
    <property type="protein sequence ID" value="ABV17212.1"/>
    <property type="molecule type" value="Genomic_DNA"/>
</dbReference>
<dbReference type="RefSeq" id="WP_000257278.1">
    <property type="nucleotide sequence ID" value="NC_009801.1"/>
</dbReference>
<dbReference type="SMR" id="A7ZV18"/>
<dbReference type="GeneID" id="93777677"/>
<dbReference type="KEGG" id="ecw:EcE24377A_4704"/>
<dbReference type="HOGENOM" id="CLU_074944_0_0_6"/>
<dbReference type="UniPathway" id="UPA00345"/>
<dbReference type="Proteomes" id="UP000001122">
    <property type="component" value="Chromosome"/>
</dbReference>
<dbReference type="GO" id="GO:0005829">
    <property type="term" value="C:cytosol"/>
    <property type="evidence" value="ECO:0007669"/>
    <property type="project" value="UniProtKB-ARBA"/>
</dbReference>
<dbReference type="GO" id="GO:0003746">
    <property type="term" value="F:translation elongation factor activity"/>
    <property type="evidence" value="ECO:0007669"/>
    <property type="project" value="UniProtKB-UniRule"/>
</dbReference>
<dbReference type="GO" id="GO:0043043">
    <property type="term" value="P:peptide biosynthetic process"/>
    <property type="evidence" value="ECO:0007669"/>
    <property type="project" value="InterPro"/>
</dbReference>
<dbReference type="CDD" id="cd04470">
    <property type="entry name" value="S1_EF-P_repeat_1"/>
    <property type="match status" value="1"/>
</dbReference>
<dbReference type="CDD" id="cd05794">
    <property type="entry name" value="S1_EF-P_repeat_2"/>
    <property type="match status" value="1"/>
</dbReference>
<dbReference type="FunFam" id="2.30.30.30:FF:000003">
    <property type="entry name" value="Elongation factor P"/>
    <property type="match status" value="1"/>
</dbReference>
<dbReference type="FunFam" id="2.40.50.140:FF:000004">
    <property type="entry name" value="Elongation factor P"/>
    <property type="match status" value="1"/>
</dbReference>
<dbReference type="FunFam" id="2.40.50.140:FF:000009">
    <property type="entry name" value="Elongation factor P"/>
    <property type="match status" value="1"/>
</dbReference>
<dbReference type="Gene3D" id="2.30.30.30">
    <property type="match status" value="1"/>
</dbReference>
<dbReference type="Gene3D" id="2.40.50.140">
    <property type="entry name" value="Nucleic acid-binding proteins"/>
    <property type="match status" value="2"/>
</dbReference>
<dbReference type="HAMAP" id="MF_00141">
    <property type="entry name" value="EF_P"/>
    <property type="match status" value="1"/>
</dbReference>
<dbReference type="InterPro" id="IPR015365">
    <property type="entry name" value="Elong-fact-P_C"/>
</dbReference>
<dbReference type="InterPro" id="IPR012340">
    <property type="entry name" value="NA-bd_OB-fold"/>
</dbReference>
<dbReference type="InterPro" id="IPR014722">
    <property type="entry name" value="Rib_uL2_dom2"/>
</dbReference>
<dbReference type="InterPro" id="IPR020599">
    <property type="entry name" value="Transl_elong_fac_P/YeiP"/>
</dbReference>
<dbReference type="InterPro" id="IPR013185">
    <property type="entry name" value="Transl_elong_KOW-like"/>
</dbReference>
<dbReference type="InterPro" id="IPR001059">
    <property type="entry name" value="Transl_elong_P/YeiP_cen"/>
</dbReference>
<dbReference type="InterPro" id="IPR013852">
    <property type="entry name" value="Transl_elong_P/YeiP_CS"/>
</dbReference>
<dbReference type="InterPro" id="IPR011768">
    <property type="entry name" value="Transl_elongation_fac_P"/>
</dbReference>
<dbReference type="InterPro" id="IPR008991">
    <property type="entry name" value="Translation_prot_SH3-like_sf"/>
</dbReference>
<dbReference type="NCBIfam" id="TIGR00038">
    <property type="entry name" value="efp"/>
    <property type="match status" value="1"/>
</dbReference>
<dbReference type="NCBIfam" id="NF001810">
    <property type="entry name" value="PRK00529.1"/>
    <property type="match status" value="1"/>
</dbReference>
<dbReference type="PANTHER" id="PTHR30053">
    <property type="entry name" value="ELONGATION FACTOR P"/>
    <property type="match status" value="1"/>
</dbReference>
<dbReference type="PANTHER" id="PTHR30053:SF12">
    <property type="entry name" value="ELONGATION FACTOR P (EF-P) FAMILY PROTEIN"/>
    <property type="match status" value="1"/>
</dbReference>
<dbReference type="Pfam" id="PF01132">
    <property type="entry name" value="EFP"/>
    <property type="match status" value="1"/>
</dbReference>
<dbReference type="Pfam" id="PF08207">
    <property type="entry name" value="EFP_N"/>
    <property type="match status" value="1"/>
</dbReference>
<dbReference type="Pfam" id="PF09285">
    <property type="entry name" value="Elong-fact-P_C"/>
    <property type="match status" value="1"/>
</dbReference>
<dbReference type="PIRSF" id="PIRSF005901">
    <property type="entry name" value="EF-P"/>
    <property type="match status" value="1"/>
</dbReference>
<dbReference type="SMART" id="SM01185">
    <property type="entry name" value="EFP"/>
    <property type="match status" value="1"/>
</dbReference>
<dbReference type="SMART" id="SM00841">
    <property type="entry name" value="Elong-fact-P_C"/>
    <property type="match status" value="1"/>
</dbReference>
<dbReference type="SUPFAM" id="SSF50249">
    <property type="entry name" value="Nucleic acid-binding proteins"/>
    <property type="match status" value="2"/>
</dbReference>
<dbReference type="SUPFAM" id="SSF50104">
    <property type="entry name" value="Translation proteins SH3-like domain"/>
    <property type="match status" value="1"/>
</dbReference>
<dbReference type="PROSITE" id="PS01275">
    <property type="entry name" value="EFP"/>
    <property type="match status" value="1"/>
</dbReference>
<organism>
    <name type="scientific">Escherichia coli O139:H28 (strain E24377A / ETEC)</name>
    <dbReference type="NCBI Taxonomy" id="331111"/>
    <lineage>
        <taxon>Bacteria</taxon>
        <taxon>Pseudomonadati</taxon>
        <taxon>Pseudomonadota</taxon>
        <taxon>Gammaproteobacteria</taxon>
        <taxon>Enterobacterales</taxon>
        <taxon>Enterobacteriaceae</taxon>
        <taxon>Escherichia</taxon>
    </lineage>
</organism>
<reference key="1">
    <citation type="journal article" date="2008" name="J. Bacteriol.">
        <title>The pangenome structure of Escherichia coli: comparative genomic analysis of E. coli commensal and pathogenic isolates.</title>
        <authorList>
            <person name="Rasko D.A."/>
            <person name="Rosovitz M.J."/>
            <person name="Myers G.S.A."/>
            <person name="Mongodin E.F."/>
            <person name="Fricke W.F."/>
            <person name="Gajer P."/>
            <person name="Crabtree J."/>
            <person name="Sebaihia M."/>
            <person name="Thomson N.R."/>
            <person name="Chaudhuri R."/>
            <person name="Henderson I.R."/>
            <person name="Sperandio V."/>
            <person name="Ravel J."/>
        </authorList>
    </citation>
    <scope>NUCLEOTIDE SEQUENCE [LARGE SCALE GENOMIC DNA]</scope>
    <source>
        <strain>E24377A / ETEC</strain>
    </source>
</reference>
<feature type="chain" id="PRO_1000057921" description="Elongation factor P">
    <location>
        <begin position="1"/>
        <end position="188"/>
    </location>
</feature>
<feature type="modified residue" description="N6-(3,6-diaminohexanoyl)-5-hydroxylysine" evidence="1">
    <location>
        <position position="34"/>
    </location>
</feature>
<comment type="function">
    <text evidence="1">Involved in peptide bond synthesis. Alleviates ribosome stalling that occurs when 3 or more consecutive Pro residues or the sequence PPG is present in a protein, possibly by augmenting the peptidyl transferase activity of the ribosome. Modification of Lys-34 is required for alleviation.</text>
</comment>
<comment type="pathway">
    <text evidence="1">Protein biosynthesis; polypeptide chain elongation.</text>
</comment>
<comment type="subcellular location">
    <subcellularLocation>
        <location evidence="1">Cytoplasm</location>
    </subcellularLocation>
</comment>
<comment type="PTM">
    <text evidence="1">Is beta-lysylated on the epsilon-amino group of Lys-34 by the combined action of EpmA and EpmB, and then hydroxylated on the C5 position of the same residue by EpmC. Lysylation is critical for the stimulatory effect of EF-P on peptide-bond formation. The lysylation moiety would extend toward the peptidyltransferase center and stabilize the terminal 3-CCA end of the tRNA. The hydroxylation of the C5 position on Lys-34 would allow additional potential stabilizing hydrogen-bond interactions with the P-tRNA.</text>
</comment>
<comment type="similarity">
    <text evidence="1">Belongs to the elongation factor P family.</text>
</comment>
<keyword id="KW-0963">Cytoplasm</keyword>
<keyword id="KW-0251">Elongation factor</keyword>
<keyword id="KW-0379">Hydroxylation</keyword>
<keyword id="KW-0648">Protein biosynthesis</keyword>
<keyword id="KW-1185">Reference proteome</keyword>
<sequence length="188" mass="20591">MATYYSNDFRAGLKIMLDGEPYAVEASEFVKPGKGQAFARVKLRRLLTGTRVEKTFKSTDSAEGADVVDMNLTYLYNDGEFWHFMNNETFEQLSADAKAIGDNAKWLLDQAECIVTLWNGQPISVTPPNFVELEIVDTDPGLKGDTAGTGGKPATLSTGAVVKVPLFVQIGEVIKVDTRSGEYVSRVK</sequence>
<proteinExistence type="inferred from homology"/>